<reference key="1">
    <citation type="journal article" date="1998" name="J. Bacteriol.">
        <title>Transcriptional analysis of the Staphylococcus aureus penicillin binding protein 2 gene.</title>
        <authorList>
            <person name="Pinho M.G."/>
            <person name="de Lencastre H."/>
            <person name="Tomasz A."/>
        </authorList>
    </citation>
    <scope>NUCLEOTIDE SEQUENCE [GENOMIC DNA]</scope>
</reference>
<reference key="2">
    <citation type="journal article" date="2005" name="J. Bacteriol.">
        <title>Insights on evolution of virulence and resistance from the complete genome analysis of an early methicillin-resistant Staphylococcus aureus strain and a biofilm-producing methicillin-resistant Staphylococcus epidermidis strain.</title>
        <authorList>
            <person name="Gill S.R."/>
            <person name="Fouts D.E."/>
            <person name="Archer G.L."/>
            <person name="Mongodin E.F."/>
            <person name="DeBoy R.T."/>
            <person name="Ravel J."/>
            <person name="Paulsen I.T."/>
            <person name="Kolonay J.F."/>
            <person name="Brinkac L.M."/>
            <person name="Beanan M.J."/>
            <person name="Dodson R.J."/>
            <person name="Daugherty S.C."/>
            <person name="Madupu R."/>
            <person name="Angiuoli S.V."/>
            <person name="Durkin A.S."/>
            <person name="Haft D.H."/>
            <person name="Vamathevan J.J."/>
            <person name="Khouri H."/>
            <person name="Utterback T.R."/>
            <person name="Lee C."/>
            <person name="Dimitrov G."/>
            <person name="Jiang L."/>
            <person name="Qin H."/>
            <person name="Weidman J."/>
            <person name="Tran K."/>
            <person name="Kang K.H."/>
            <person name="Hance I.R."/>
            <person name="Nelson K.E."/>
            <person name="Fraser C.M."/>
        </authorList>
    </citation>
    <scope>NUCLEOTIDE SEQUENCE [LARGE SCALE GENOMIC DNA]</scope>
    <source>
        <strain>COL</strain>
    </source>
</reference>
<feature type="chain" id="PRO_0000212302" description="Holliday junction resolvase RecU">
    <location>
        <begin position="1"/>
        <end position="208"/>
    </location>
</feature>
<feature type="binding site" evidence="1">
    <location>
        <position position="87"/>
    </location>
    <ligand>
        <name>Mg(2+)</name>
        <dbReference type="ChEBI" id="CHEBI:18420"/>
    </ligand>
</feature>
<feature type="binding site" evidence="1">
    <location>
        <position position="89"/>
    </location>
    <ligand>
        <name>Mg(2+)</name>
        <dbReference type="ChEBI" id="CHEBI:18420"/>
    </ligand>
</feature>
<feature type="binding site" evidence="1">
    <location>
        <position position="102"/>
    </location>
    <ligand>
        <name>Mg(2+)</name>
        <dbReference type="ChEBI" id="CHEBI:18420"/>
    </ligand>
</feature>
<feature type="binding site" evidence="1">
    <location>
        <position position="121"/>
    </location>
    <ligand>
        <name>Mg(2+)</name>
        <dbReference type="ChEBI" id="CHEBI:18420"/>
    </ligand>
</feature>
<feature type="site" description="Transition state stabilizer" evidence="1">
    <location>
        <position position="104"/>
    </location>
</feature>
<sequence>MNYPNGKPYRKNSAIDGGKKTAAFSNIEYGGRGMSLEKDIEHSNTFYLKSDIAVIHKKPTPVQIVNVNYPKRSKAVINEAYFRTPSTTDYNGVYQGYYIDFEAKETKNKTSFPLNNIHDHQVEHMKNAYQQKGIVFLMIRFKTLDEVYLLPYSKFEVFWKRYKDNIKKSITVDEIRKNGYHIPYQYQPRLDYLKAVDKLILDESEDRV</sequence>
<proteinExistence type="inferred from homology"/>
<evidence type="ECO:0000250" key="1"/>
<evidence type="ECO:0000255" key="2">
    <source>
        <dbReference type="HAMAP-Rule" id="MF_00130"/>
    </source>
</evidence>
<evidence type="ECO:0000305" key="3"/>
<gene>
    <name type="primary">recU</name>
    <name type="ordered locus">SACOL1489</name>
</gene>
<name>RECU_STAAC</name>
<accession>P68815</accession>
<accession>Q9ZAG8</accession>
<organism>
    <name type="scientific">Staphylococcus aureus (strain COL)</name>
    <dbReference type="NCBI Taxonomy" id="93062"/>
    <lineage>
        <taxon>Bacteria</taxon>
        <taxon>Bacillati</taxon>
        <taxon>Bacillota</taxon>
        <taxon>Bacilli</taxon>
        <taxon>Bacillales</taxon>
        <taxon>Staphylococcaceae</taxon>
        <taxon>Staphylococcus</taxon>
    </lineage>
</organism>
<keyword id="KW-0963">Cytoplasm</keyword>
<keyword id="KW-0227">DNA damage</keyword>
<keyword id="KW-0233">DNA recombination</keyword>
<keyword id="KW-0234">DNA repair</keyword>
<keyword id="KW-0255">Endonuclease</keyword>
<keyword id="KW-0378">Hydrolase</keyword>
<keyword id="KW-0460">Magnesium</keyword>
<keyword id="KW-0479">Metal-binding</keyword>
<keyword id="KW-0540">Nuclease</keyword>
<protein>
    <recommendedName>
        <fullName>Holliday junction resolvase RecU</fullName>
        <ecNumber evidence="2">3.1.21.10</ecNumber>
    </recommendedName>
    <alternativeName>
        <fullName>Recombination protein U homolog</fullName>
    </alternativeName>
</protein>
<dbReference type="EC" id="3.1.21.10" evidence="2"/>
<dbReference type="EMBL" id="Y17795">
    <property type="protein sequence ID" value="CAA76852.1"/>
    <property type="molecule type" value="Genomic_DNA"/>
</dbReference>
<dbReference type="EMBL" id="CP000046">
    <property type="protein sequence ID" value="AAW36684.1"/>
    <property type="molecule type" value="Genomic_DNA"/>
</dbReference>
<dbReference type="RefSeq" id="WP_001108889.1">
    <property type="nucleotide sequence ID" value="NZ_JBGOFO010000003.1"/>
</dbReference>
<dbReference type="SMR" id="P68815"/>
<dbReference type="KEGG" id="sac:SACOL1489"/>
<dbReference type="HOGENOM" id="CLU_096340_0_0_9"/>
<dbReference type="Proteomes" id="UP000000530">
    <property type="component" value="Chromosome"/>
</dbReference>
<dbReference type="GO" id="GO:0005737">
    <property type="term" value="C:cytoplasm"/>
    <property type="evidence" value="ECO:0007669"/>
    <property type="project" value="UniProtKB-SubCell"/>
</dbReference>
<dbReference type="GO" id="GO:0004519">
    <property type="term" value="F:endonuclease activity"/>
    <property type="evidence" value="ECO:0007669"/>
    <property type="project" value="UniProtKB-UniRule"/>
</dbReference>
<dbReference type="GO" id="GO:0000287">
    <property type="term" value="F:magnesium ion binding"/>
    <property type="evidence" value="ECO:0007669"/>
    <property type="project" value="UniProtKB-UniRule"/>
</dbReference>
<dbReference type="GO" id="GO:0003676">
    <property type="term" value="F:nucleic acid binding"/>
    <property type="evidence" value="ECO:0007669"/>
    <property type="project" value="InterPro"/>
</dbReference>
<dbReference type="GO" id="GO:0007059">
    <property type="term" value="P:chromosome segregation"/>
    <property type="evidence" value="ECO:0007669"/>
    <property type="project" value="UniProtKB-UniRule"/>
</dbReference>
<dbReference type="GO" id="GO:0006310">
    <property type="term" value="P:DNA recombination"/>
    <property type="evidence" value="ECO:0007669"/>
    <property type="project" value="UniProtKB-UniRule"/>
</dbReference>
<dbReference type="GO" id="GO:0006281">
    <property type="term" value="P:DNA repair"/>
    <property type="evidence" value="ECO:0007669"/>
    <property type="project" value="UniProtKB-UniRule"/>
</dbReference>
<dbReference type="CDD" id="cd22354">
    <property type="entry name" value="RecU-like"/>
    <property type="match status" value="1"/>
</dbReference>
<dbReference type="Gene3D" id="3.40.1350.10">
    <property type="match status" value="1"/>
</dbReference>
<dbReference type="HAMAP" id="MF_00130">
    <property type="entry name" value="RecU"/>
    <property type="match status" value="1"/>
</dbReference>
<dbReference type="InterPro" id="IPR004612">
    <property type="entry name" value="Resolv_RecU"/>
</dbReference>
<dbReference type="InterPro" id="IPR011335">
    <property type="entry name" value="Restrct_endonuc-II-like"/>
</dbReference>
<dbReference type="InterPro" id="IPR011856">
    <property type="entry name" value="tRNA_endonuc-like_dom_sf"/>
</dbReference>
<dbReference type="NCBIfam" id="NF002581">
    <property type="entry name" value="PRK02234.1-2"/>
    <property type="match status" value="1"/>
</dbReference>
<dbReference type="NCBIfam" id="NF002583">
    <property type="entry name" value="PRK02234.1-4"/>
    <property type="match status" value="1"/>
</dbReference>
<dbReference type="NCBIfam" id="NF002584">
    <property type="entry name" value="PRK02234.1-5"/>
    <property type="match status" value="1"/>
</dbReference>
<dbReference type="NCBIfam" id="TIGR00648">
    <property type="entry name" value="recU"/>
    <property type="match status" value="1"/>
</dbReference>
<dbReference type="Pfam" id="PF03838">
    <property type="entry name" value="RecU"/>
    <property type="match status" value="1"/>
</dbReference>
<dbReference type="PIRSF" id="PIRSF037785">
    <property type="entry name" value="RecU"/>
    <property type="match status" value="1"/>
</dbReference>
<dbReference type="SUPFAM" id="SSF52980">
    <property type="entry name" value="Restriction endonuclease-like"/>
    <property type="match status" value="1"/>
</dbReference>
<comment type="function">
    <text evidence="1">Endonuclease that resolves Holliday junction intermediates in genetic recombination. Cleaves mobile four-strand junctions by introducing symmetrical nicks in paired strands. Promotes annealing of linear ssDNA with homologous dsDNA. Required for DNA repair, homologous recombination and chromosome segregation (By similarity).</text>
</comment>
<comment type="catalytic activity">
    <reaction evidence="2">
        <text>Endonucleolytic cleavage at a junction such as a reciprocal single-stranded crossover between two homologous DNA duplexes (Holliday junction).</text>
        <dbReference type="EC" id="3.1.21.10"/>
    </reaction>
</comment>
<comment type="cofactor">
    <cofactor evidence="1">
        <name>Mg(2+)</name>
        <dbReference type="ChEBI" id="CHEBI:18420"/>
    </cofactor>
    <text evidence="1">Binds 1 Mg(2+) ion per subunit.</text>
</comment>
<comment type="subcellular location">
    <subcellularLocation>
        <location evidence="3">Cytoplasm</location>
    </subcellularLocation>
</comment>
<comment type="similarity">
    <text evidence="3">Belongs to the RecU family.</text>
</comment>